<evidence type="ECO:0000255" key="1">
    <source>
        <dbReference type="HAMAP-Rule" id="MF_01356"/>
    </source>
</evidence>
<reference key="1">
    <citation type="submission" date="2007-06" db="EMBL/GenBank/DDBJ databases">
        <title>Complete sequence of Clostridium beijerinckii NCIMB 8052.</title>
        <authorList>
            <consortium name="US DOE Joint Genome Institute"/>
            <person name="Copeland A."/>
            <person name="Lucas S."/>
            <person name="Lapidus A."/>
            <person name="Barry K."/>
            <person name="Detter J.C."/>
            <person name="Glavina del Rio T."/>
            <person name="Hammon N."/>
            <person name="Israni S."/>
            <person name="Dalin E."/>
            <person name="Tice H."/>
            <person name="Pitluck S."/>
            <person name="Sims D."/>
            <person name="Brettin T."/>
            <person name="Bruce D."/>
            <person name="Tapia R."/>
            <person name="Brainard J."/>
            <person name="Schmutz J."/>
            <person name="Larimer F."/>
            <person name="Land M."/>
            <person name="Hauser L."/>
            <person name="Kyrpides N."/>
            <person name="Mikhailova N."/>
            <person name="Bennet G."/>
            <person name="Cann I."/>
            <person name="Chen J.-S."/>
            <person name="Contreras A.L."/>
            <person name="Jones D."/>
            <person name="Kashket E."/>
            <person name="Mitchell W."/>
            <person name="Stoddard S."/>
            <person name="Schwarz W."/>
            <person name="Qureshi N."/>
            <person name="Young M."/>
            <person name="Shi Z."/>
            <person name="Ezeji T."/>
            <person name="White B."/>
            <person name="Blaschek H."/>
            <person name="Richardson P."/>
        </authorList>
    </citation>
    <scope>NUCLEOTIDE SEQUENCE [LARGE SCALE GENOMIC DNA]</scope>
    <source>
        <strain>ATCC 51743 / NCIMB 8052</strain>
    </source>
</reference>
<feature type="chain" id="PRO_0000376183" description="NADH-quinone oxidoreductase subunit B">
    <location>
        <begin position="1"/>
        <end position="169"/>
    </location>
</feature>
<feature type="binding site" evidence="1">
    <location>
        <position position="45"/>
    </location>
    <ligand>
        <name>[4Fe-4S] cluster</name>
        <dbReference type="ChEBI" id="CHEBI:49883"/>
    </ligand>
</feature>
<feature type="binding site" evidence="1">
    <location>
        <position position="46"/>
    </location>
    <ligand>
        <name>[4Fe-4S] cluster</name>
        <dbReference type="ChEBI" id="CHEBI:49883"/>
    </ligand>
</feature>
<feature type="binding site" evidence="1">
    <location>
        <position position="111"/>
    </location>
    <ligand>
        <name>[4Fe-4S] cluster</name>
        <dbReference type="ChEBI" id="CHEBI:49883"/>
    </ligand>
</feature>
<feature type="binding site" evidence="1">
    <location>
        <position position="141"/>
    </location>
    <ligand>
        <name>[4Fe-4S] cluster</name>
        <dbReference type="ChEBI" id="CHEBI:49883"/>
    </ligand>
</feature>
<keyword id="KW-0004">4Fe-4S</keyword>
<keyword id="KW-1003">Cell membrane</keyword>
<keyword id="KW-0408">Iron</keyword>
<keyword id="KW-0411">Iron-sulfur</keyword>
<keyword id="KW-0472">Membrane</keyword>
<keyword id="KW-0479">Metal-binding</keyword>
<keyword id="KW-0520">NAD</keyword>
<keyword id="KW-0874">Quinone</keyword>
<keyword id="KW-1278">Translocase</keyword>
<keyword id="KW-0813">Transport</keyword>
<name>NUOB_CLOB8</name>
<sequence>MEVNFKQDKEIQEQIEKNIILTKLDDTLNYFRAHSFWPLTFGLACCAIEMMAAGGARYDIARFGYEVFRASPRQADLMIVAGTITEKMAPIVKKIYDQMPEPKWVIAMGSCATSGGPFVDSYNVVPGADTFLPVDVYIPGCPPRPEALIHGLLTLKEKIIHPKEVGRSE</sequence>
<proteinExistence type="inferred from homology"/>
<organism>
    <name type="scientific">Clostridium beijerinckii (strain ATCC 51743 / NCIMB 8052)</name>
    <name type="common">Clostridium acetobutylicum</name>
    <dbReference type="NCBI Taxonomy" id="290402"/>
    <lineage>
        <taxon>Bacteria</taxon>
        <taxon>Bacillati</taxon>
        <taxon>Bacillota</taxon>
        <taxon>Clostridia</taxon>
        <taxon>Eubacteriales</taxon>
        <taxon>Clostridiaceae</taxon>
        <taxon>Clostridium</taxon>
    </lineage>
</organism>
<dbReference type="EC" id="7.1.1.-" evidence="1"/>
<dbReference type="EMBL" id="CP000721">
    <property type="protein sequence ID" value="ABR35134.1"/>
    <property type="molecule type" value="Genomic_DNA"/>
</dbReference>
<dbReference type="RefSeq" id="WP_012059187.1">
    <property type="nucleotide sequence ID" value="NC_009617.1"/>
</dbReference>
<dbReference type="SMR" id="A6LXQ4"/>
<dbReference type="KEGG" id="cbe:Cbei_2995"/>
<dbReference type="eggNOG" id="COG0377">
    <property type="taxonomic scope" value="Bacteria"/>
</dbReference>
<dbReference type="HOGENOM" id="CLU_055737_7_3_9"/>
<dbReference type="Proteomes" id="UP000000565">
    <property type="component" value="Chromosome"/>
</dbReference>
<dbReference type="GO" id="GO:0005886">
    <property type="term" value="C:plasma membrane"/>
    <property type="evidence" value="ECO:0007669"/>
    <property type="project" value="UniProtKB-SubCell"/>
</dbReference>
<dbReference type="GO" id="GO:0045271">
    <property type="term" value="C:respiratory chain complex I"/>
    <property type="evidence" value="ECO:0007669"/>
    <property type="project" value="TreeGrafter"/>
</dbReference>
<dbReference type="GO" id="GO:0051539">
    <property type="term" value="F:4 iron, 4 sulfur cluster binding"/>
    <property type="evidence" value="ECO:0007669"/>
    <property type="project" value="UniProtKB-KW"/>
</dbReference>
<dbReference type="GO" id="GO:0005506">
    <property type="term" value="F:iron ion binding"/>
    <property type="evidence" value="ECO:0007669"/>
    <property type="project" value="UniProtKB-UniRule"/>
</dbReference>
<dbReference type="GO" id="GO:0008137">
    <property type="term" value="F:NADH dehydrogenase (ubiquinone) activity"/>
    <property type="evidence" value="ECO:0007669"/>
    <property type="project" value="InterPro"/>
</dbReference>
<dbReference type="GO" id="GO:0050136">
    <property type="term" value="F:NADH:ubiquinone reductase (non-electrogenic) activity"/>
    <property type="evidence" value="ECO:0007669"/>
    <property type="project" value="UniProtKB-UniRule"/>
</dbReference>
<dbReference type="GO" id="GO:0048038">
    <property type="term" value="F:quinone binding"/>
    <property type="evidence" value="ECO:0007669"/>
    <property type="project" value="UniProtKB-KW"/>
</dbReference>
<dbReference type="GO" id="GO:0009060">
    <property type="term" value="P:aerobic respiration"/>
    <property type="evidence" value="ECO:0007669"/>
    <property type="project" value="TreeGrafter"/>
</dbReference>
<dbReference type="GO" id="GO:0015990">
    <property type="term" value="P:electron transport coupled proton transport"/>
    <property type="evidence" value="ECO:0007669"/>
    <property type="project" value="TreeGrafter"/>
</dbReference>
<dbReference type="FunFam" id="3.40.50.12280:FF:000002">
    <property type="entry name" value="NADH-quinone oxidoreductase subunit B"/>
    <property type="match status" value="1"/>
</dbReference>
<dbReference type="Gene3D" id="3.40.50.12280">
    <property type="match status" value="1"/>
</dbReference>
<dbReference type="HAMAP" id="MF_01356">
    <property type="entry name" value="NDH1_NuoB"/>
    <property type="match status" value="1"/>
</dbReference>
<dbReference type="InterPro" id="IPR006137">
    <property type="entry name" value="NADH_UbQ_OxRdtase-like_20kDa"/>
</dbReference>
<dbReference type="InterPro" id="IPR006138">
    <property type="entry name" value="NADH_UQ_OxRdtase_20Kd_su"/>
</dbReference>
<dbReference type="NCBIfam" id="TIGR01957">
    <property type="entry name" value="nuoB_fam"/>
    <property type="match status" value="1"/>
</dbReference>
<dbReference type="NCBIfam" id="NF005012">
    <property type="entry name" value="PRK06411.1"/>
    <property type="match status" value="1"/>
</dbReference>
<dbReference type="PANTHER" id="PTHR11995">
    <property type="entry name" value="NADH DEHYDROGENASE"/>
    <property type="match status" value="1"/>
</dbReference>
<dbReference type="PANTHER" id="PTHR11995:SF14">
    <property type="entry name" value="NADH DEHYDROGENASE [UBIQUINONE] IRON-SULFUR PROTEIN 7, MITOCHONDRIAL"/>
    <property type="match status" value="1"/>
</dbReference>
<dbReference type="Pfam" id="PF01058">
    <property type="entry name" value="Oxidored_q6"/>
    <property type="match status" value="1"/>
</dbReference>
<dbReference type="SUPFAM" id="SSF56770">
    <property type="entry name" value="HydA/Nqo6-like"/>
    <property type="match status" value="1"/>
</dbReference>
<dbReference type="PROSITE" id="PS01150">
    <property type="entry name" value="COMPLEX1_20K"/>
    <property type="match status" value="1"/>
</dbReference>
<comment type="function">
    <text evidence="1">NDH-1 shuttles electrons from NADH, via FMN and iron-sulfur (Fe-S) centers, to quinones in the respiratory chain. The immediate electron acceptor for the enzyme in this species is believed to be a menaquinone. Couples the redox reaction to proton translocation (for every two electrons transferred, four hydrogen ions are translocated across the cytoplasmic membrane), and thus conserves the redox energy in a proton gradient.</text>
</comment>
<comment type="catalytic activity">
    <reaction evidence="1">
        <text>a quinone + NADH + 5 H(+)(in) = a quinol + NAD(+) + 4 H(+)(out)</text>
        <dbReference type="Rhea" id="RHEA:57888"/>
        <dbReference type="ChEBI" id="CHEBI:15378"/>
        <dbReference type="ChEBI" id="CHEBI:24646"/>
        <dbReference type="ChEBI" id="CHEBI:57540"/>
        <dbReference type="ChEBI" id="CHEBI:57945"/>
        <dbReference type="ChEBI" id="CHEBI:132124"/>
    </reaction>
</comment>
<comment type="cofactor">
    <cofactor evidence="1">
        <name>[4Fe-4S] cluster</name>
        <dbReference type="ChEBI" id="CHEBI:49883"/>
    </cofactor>
    <text evidence="1">Binds 1 [4Fe-4S] cluster.</text>
</comment>
<comment type="subunit">
    <text evidence="1">NDH-1 is composed of 14 different subunits. Subunits NuoB, C, D, E, F, and G constitute the peripheral sector of the complex.</text>
</comment>
<comment type="subcellular location">
    <subcellularLocation>
        <location evidence="1">Cell membrane</location>
        <topology evidence="1">Peripheral membrane protein</topology>
        <orientation evidence="1">Cytoplasmic side</orientation>
    </subcellularLocation>
</comment>
<comment type="similarity">
    <text evidence="1">Belongs to the complex I 20 kDa subunit family.</text>
</comment>
<protein>
    <recommendedName>
        <fullName evidence="1">NADH-quinone oxidoreductase subunit B</fullName>
        <ecNumber evidence="1">7.1.1.-</ecNumber>
    </recommendedName>
    <alternativeName>
        <fullName evidence="1">NADH dehydrogenase I subunit B</fullName>
    </alternativeName>
    <alternativeName>
        <fullName evidence="1">NDH-1 subunit B</fullName>
    </alternativeName>
</protein>
<accession>A6LXQ4</accession>
<gene>
    <name evidence="1" type="primary">nuoB</name>
    <name type="ordered locus">Cbei_2995</name>
</gene>